<reference key="1">
    <citation type="submission" date="2007-06" db="EMBL/GenBank/DDBJ databases">
        <title>Complete sequence of chromosome of Staphylococcus aureus subsp. aureus JH1.</title>
        <authorList>
            <consortium name="US DOE Joint Genome Institute"/>
            <person name="Copeland A."/>
            <person name="Lucas S."/>
            <person name="Lapidus A."/>
            <person name="Barry K."/>
            <person name="Detter J.C."/>
            <person name="Glavina del Rio T."/>
            <person name="Hammon N."/>
            <person name="Israni S."/>
            <person name="Dalin E."/>
            <person name="Tice H."/>
            <person name="Pitluck S."/>
            <person name="Chain P."/>
            <person name="Malfatti S."/>
            <person name="Shin M."/>
            <person name="Vergez L."/>
            <person name="Schmutz J."/>
            <person name="Larimer F."/>
            <person name="Land M."/>
            <person name="Hauser L."/>
            <person name="Kyrpides N."/>
            <person name="Ivanova N."/>
            <person name="Tomasz A."/>
            <person name="Richardson P."/>
        </authorList>
    </citation>
    <scope>NUCLEOTIDE SEQUENCE [LARGE SCALE GENOMIC DNA]</scope>
    <source>
        <strain>JH1</strain>
    </source>
</reference>
<feature type="chain" id="PRO_1000083225" description="Probable glycine dehydrogenase (decarboxylating) subunit 1">
    <location>
        <begin position="1"/>
        <end position="448"/>
    </location>
</feature>
<keyword id="KW-0560">Oxidoreductase</keyword>
<proteinExistence type="inferred from homology"/>
<name>GCSPA_STAA2</name>
<gene>
    <name evidence="1" type="primary">gcvPA</name>
    <name type="ordered locus">SaurJH1_1627</name>
</gene>
<organism>
    <name type="scientific">Staphylococcus aureus (strain JH1)</name>
    <dbReference type="NCBI Taxonomy" id="359787"/>
    <lineage>
        <taxon>Bacteria</taxon>
        <taxon>Bacillati</taxon>
        <taxon>Bacillota</taxon>
        <taxon>Bacilli</taxon>
        <taxon>Bacillales</taxon>
        <taxon>Staphylococcaceae</taxon>
        <taxon>Staphylococcus</taxon>
    </lineage>
</organism>
<sequence length="448" mass="49707">MSHRYIPLTEKDKQEMLQTIGAKSIGELFGDVPSDILLNRDLNIAEGEAETTLLRRLNRIASKNITKETHTSFLGAGVYDHYAPSVVDAMISRSEFYTAYTPYQPEISQGELQAIFEFQTLICELTDMDVANSSMYDGMTSFAEACILAFSQTKKNKIVVSKGLHYQALQVLHTYAKTRKEFEVVEIDLDGTVTDLKKLEAAVDDETAAVAVQYPNFYGSIEDLEKIQSFIEDKKALFIVYANPLALGLLTPPGSFGADIVVGDTQPFGIPAQFGGPHCGYFATTKKLMRKVPGRLVGQTQDDEGNRGFVLTLQAREQHIRRDKATSNICSNQALNALASSIAMSALGKQGIYDIAVQNIEHANYAKQQFIKKGFEVLDGTSFNEFVVKFDKPIQQVNEELVKYNIIGGFDLGVVSDDFKNHMLIAVTELRTKDEIDTFVEKAGELND</sequence>
<evidence type="ECO:0000255" key="1">
    <source>
        <dbReference type="HAMAP-Rule" id="MF_00712"/>
    </source>
</evidence>
<dbReference type="EC" id="1.4.4.2" evidence="1"/>
<dbReference type="EMBL" id="CP000736">
    <property type="protein sequence ID" value="ABR52475.1"/>
    <property type="molecule type" value="Genomic_DNA"/>
</dbReference>
<dbReference type="SMR" id="A6U207"/>
<dbReference type="KEGG" id="sah:SaurJH1_1627"/>
<dbReference type="HOGENOM" id="CLU_004620_0_2_9"/>
<dbReference type="GO" id="GO:0004375">
    <property type="term" value="F:glycine dehydrogenase (decarboxylating) activity"/>
    <property type="evidence" value="ECO:0007669"/>
    <property type="project" value="UniProtKB-EC"/>
</dbReference>
<dbReference type="GO" id="GO:0019464">
    <property type="term" value="P:glycine decarboxylation via glycine cleavage system"/>
    <property type="evidence" value="ECO:0007669"/>
    <property type="project" value="UniProtKB-UniRule"/>
</dbReference>
<dbReference type="GO" id="GO:0009116">
    <property type="term" value="P:nucleoside metabolic process"/>
    <property type="evidence" value="ECO:0007669"/>
    <property type="project" value="InterPro"/>
</dbReference>
<dbReference type="CDD" id="cd00613">
    <property type="entry name" value="GDC-P"/>
    <property type="match status" value="1"/>
</dbReference>
<dbReference type="Gene3D" id="3.90.1150.10">
    <property type="entry name" value="Aspartate Aminotransferase, domain 1"/>
    <property type="match status" value="1"/>
</dbReference>
<dbReference type="Gene3D" id="3.40.640.10">
    <property type="entry name" value="Type I PLP-dependent aspartate aminotransferase-like (Major domain)"/>
    <property type="match status" value="1"/>
</dbReference>
<dbReference type="HAMAP" id="MF_00712">
    <property type="entry name" value="GcvPA"/>
    <property type="match status" value="1"/>
</dbReference>
<dbReference type="InterPro" id="IPR023010">
    <property type="entry name" value="GcvPA"/>
</dbReference>
<dbReference type="InterPro" id="IPR049315">
    <property type="entry name" value="GDC-P_N"/>
</dbReference>
<dbReference type="InterPro" id="IPR020581">
    <property type="entry name" value="GDC_P"/>
</dbReference>
<dbReference type="InterPro" id="IPR015424">
    <property type="entry name" value="PyrdxlP-dep_Trfase"/>
</dbReference>
<dbReference type="InterPro" id="IPR015421">
    <property type="entry name" value="PyrdxlP-dep_Trfase_major"/>
</dbReference>
<dbReference type="InterPro" id="IPR015422">
    <property type="entry name" value="PyrdxlP-dep_Trfase_small"/>
</dbReference>
<dbReference type="NCBIfam" id="NF001696">
    <property type="entry name" value="PRK00451.1"/>
    <property type="match status" value="1"/>
</dbReference>
<dbReference type="PANTHER" id="PTHR42806">
    <property type="entry name" value="GLYCINE CLEAVAGE SYSTEM P-PROTEIN"/>
    <property type="match status" value="1"/>
</dbReference>
<dbReference type="PANTHER" id="PTHR42806:SF1">
    <property type="entry name" value="GLYCINE DEHYDROGENASE (DECARBOXYLATING)"/>
    <property type="match status" value="1"/>
</dbReference>
<dbReference type="Pfam" id="PF02347">
    <property type="entry name" value="GDC-P"/>
    <property type="match status" value="1"/>
</dbReference>
<dbReference type="PIRSF" id="PIRSF006815">
    <property type="entry name" value="GcvPA"/>
    <property type="match status" value="1"/>
</dbReference>
<dbReference type="SUPFAM" id="SSF53383">
    <property type="entry name" value="PLP-dependent transferases"/>
    <property type="match status" value="1"/>
</dbReference>
<accession>A6U207</accession>
<comment type="function">
    <text evidence="1">The glycine cleavage system catalyzes the degradation of glycine. The P protein binds the alpha-amino group of glycine through its pyridoxal phosphate cofactor; CO(2) is released and the remaining methylamine moiety is then transferred to the lipoamide cofactor of the H protein.</text>
</comment>
<comment type="catalytic activity">
    <reaction evidence="1">
        <text>N(6)-[(R)-lipoyl]-L-lysyl-[glycine-cleavage complex H protein] + glycine + H(+) = N(6)-[(R)-S(8)-aminomethyldihydrolipoyl]-L-lysyl-[glycine-cleavage complex H protein] + CO2</text>
        <dbReference type="Rhea" id="RHEA:24304"/>
        <dbReference type="Rhea" id="RHEA-COMP:10494"/>
        <dbReference type="Rhea" id="RHEA-COMP:10495"/>
        <dbReference type="ChEBI" id="CHEBI:15378"/>
        <dbReference type="ChEBI" id="CHEBI:16526"/>
        <dbReference type="ChEBI" id="CHEBI:57305"/>
        <dbReference type="ChEBI" id="CHEBI:83099"/>
        <dbReference type="ChEBI" id="CHEBI:83143"/>
        <dbReference type="EC" id="1.4.4.2"/>
    </reaction>
</comment>
<comment type="subunit">
    <text evidence="1">The glycine cleavage system is composed of four proteins: P, T, L and H. In this organism, the P 'protein' is a heterodimer of two subunits.</text>
</comment>
<comment type="similarity">
    <text evidence="1">Belongs to the GcvP family. N-terminal subunit subfamily.</text>
</comment>
<protein>
    <recommendedName>
        <fullName evidence="1">Probable glycine dehydrogenase (decarboxylating) subunit 1</fullName>
        <ecNumber evidence="1">1.4.4.2</ecNumber>
    </recommendedName>
    <alternativeName>
        <fullName evidence="1">Glycine cleavage system P-protein subunit 1</fullName>
    </alternativeName>
    <alternativeName>
        <fullName evidence="1">Glycine decarboxylase subunit 1</fullName>
    </alternativeName>
    <alternativeName>
        <fullName evidence="1">Glycine dehydrogenase (aminomethyl-transferring) subunit 1</fullName>
    </alternativeName>
</protein>